<evidence type="ECO:0000250" key="1"/>
<evidence type="ECO:0000256" key="2">
    <source>
        <dbReference type="SAM" id="MobiDB-lite"/>
    </source>
</evidence>
<evidence type="ECO:0000303" key="3">
    <source>
    </source>
</evidence>
<evidence type="ECO:0000303" key="4">
    <source>
    </source>
</evidence>
<evidence type="ECO:0000305" key="5"/>
<feature type="chain" id="PRO_0000206295" description="Protein transport Sec1a">
    <location>
        <begin position="1"/>
        <end position="673"/>
    </location>
</feature>
<feature type="region of interest" description="Disordered" evidence="2">
    <location>
        <begin position="538"/>
        <end position="591"/>
    </location>
</feature>
<feature type="splice variant" id="VSP_036635" description="In isoform 3." evidence="3">
    <original>LVEELFKRREPMPGMDAIYFIQPSKENI</original>
    <variation>C</variation>
    <location>
        <begin position="74"/>
        <end position="101"/>
    </location>
</feature>
<feature type="splice variant" id="VSP_036636" description="In isoform 3." evidence="3">
    <location>
        <begin position="150"/>
        <end position="160"/>
    </location>
</feature>
<feature type="splice variant" id="VSP_036637" description="In isoform 3." evidence="3">
    <location>
        <begin position="452"/>
        <end position="461"/>
    </location>
</feature>
<feature type="splice variant" id="VSP_036638" description="In isoform 2." evidence="4">
    <original>SDSVLKSASTEFKKLGQRIFVF</original>
    <variation>RHSILHNDFLFFGPFERSLDFF</variation>
    <location>
        <begin position="590"/>
        <end position="611"/>
    </location>
</feature>
<feature type="splice variant" id="VSP_036639" description="In isoform 3." evidence="3">
    <original>SDSVLKSASTEFKKLGQ</original>
    <variation>RHSILHNDFLFFGPFE</variation>
    <location>
        <begin position="590"/>
        <end position="606"/>
    </location>
</feature>
<feature type="splice variant" id="VSP_036640" description="In isoform 2." evidence="4">
    <location>
        <begin position="612"/>
        <end position="673"/>
    </location>
</feature>
<feature type="sequence conflict" description="In Ref. 4; BX816413." evidence="5" ref="4">
    <original>V</original>
    <variation>F</variation>
    <location>
        <position position="102"/>
    </location>
</feature>
<feature type="sequence conflict" description="In Ref. 4; BX816413." evidence="5" ref="4">
    <original>V</original>
    <variation>L</variation>
    <location>
        <position position="610"/>
    </location>
</feature>
<keyword id="KW-0025">Alternative splicing</keyword>
<keyword id="KW-0653">Protein transport</keyword>
<keyword id="KW-1185">Reference proteome</keyword>
<keyword id="KW-0813">Transport</keyword>
<protein>
    <recommendedName>
        <fullName>Protein transport Sec1a</fullName>
        <shortName>AtSec1a</shortName>
    </recommendedName>
</protein>
<sequence length="673" mass="76108">MSFSDSESSSHGGGGGDYKFFRQISRDRLLHEMLGSTKTGDSKAWKILIMDRVTVKVMSQSCKMADITDQGISLVEELFKRREPMPGMDAIYFIQPSKENIVMFLSDMSGREPLYRKAFIFFSSTIPKELVNHIKSDSSVLPRIGALREMNMEYFPIDNQGFLTDHEQALETLYAEDAENSRHFHICLNIMATRIATVFASLKELPFVRYRAAKSTASRDLVPSKLAAAIWDCISKYKAIPNFPQTETCELLIVDRSVDQIAPIIHEWTYDAMCHDLLDMEGNKHVIEVPSKTGGPPEKKEIVLEDHDPVWLELRHTHIADASERLHEKMTNFASKNKAAQMRSRDGSELSTRDLQKIVQALPQYGEQVDKLSTHVELAGKINRIIRDTGLRDLGQLEQDLVFGDAGAKDVINFLRTNQDTNPENKLRLLMIYATVYPEKFEGDKGVKLMQLARLSPVDMKVISNMQLIAGSPENKAKSGSFSLKFDAGKTKQANRKDRSGEEETWQLFRFYPMIEELLEKLVKGDLSKSDYLCMNQSSHKEESEARTGSVRKSSAPTAVPERKATPHSMRSRRTATWARPHSSDDGYSSDSVLKSASTEFKKLGQRIFVFIIGGATRSELRVCHKLTSSLRREVVLGSTSFDDPPQYITKLKLLSEKDIQGAPAQPFKPQYW</sequence>
<dbReference type="EMBL" id="AF335539">
    <property type="protein sequence ID" value="AAK15767.1"/>
    <property type="molecule type" value="mRNA"/>
</dbReference>
<dbReference type="EMBL" id="AC020622">
    <property type="protein sequence ID" value="AAF76479.1"/>
    <property type="status" value="ALT_SEQ"/>
    <property type="molecule type" value="Genomic_DNA"/>
</dbReference>
<dbReference type="EMBL" id="U89959">
    <property type="protein sequence ID" value="AAC24365.1"/>
    <property type="status" value="ALT_SEQ"/>
    <property type="molecule type" value="Genomic_DNA"/>
</dbReference>
<dbReference type="EMBL" id="CP002684">
    <property type="protein sequence ID" value="AEE27365.1"/>
    <property type="molecule type" value="Genomic_DNA"/>
</dbReference>
<dbReference type="EMBL" id="CP002684">
    <property type="protein sequence ID" value="ANM57903.1"/>
    <property type="molecule type" value="Genomic_DNA"/>
</dbReference>
<dbReference type="EMBL" id="BX816413">
    <property type="status" value="NOT_ANNOTATED_CDS"/>
    <property type="molecule type" value="mRNA"/>
</dbReference>
<dbReference type="PIR" id="B86152">
    <property type="entry name" value="B86152"/>
</dbReference>
<dbReference type="RefSeq" id="NP_001320381.1">
    <molecule id="Q9C5P7-2"/>
    <property type="nucleotide sequence ID" value="NM_001331318.1"/>
</dbReference>
<dbReference type="RefSeq" id="NP_563643.4">
    <molecule id="Q9C5P7-1"/>
    <property type="nucleotide sequence ID" value="NM_100081.5"/>
</dbReference>
<dbReference type="SMR" id="Q9C5P7"/>
<dbReference type="BioGRID" id="24523">
    <property type="interactions" value="1"/>
</dbReference>
<dbReference type="FunCoup" id="Q9C5P7">
    <property type="interactions" value="3022"/>
</dbReference>
<dbReference type="STRING" id="3702.Q9C5P7"/>
<dbReference type="iPTMnet" id="Q9C5P7"/>
<dbReference type="PaxDb" id="3702-AT1G02010.1"/>
<dbReference type="ProteomicsDB" id="232756">
    <molecule id="Q9C5P7-1"/>
</dbReference>
<dbReference type="EnsemblPlants" id="AT1G02010.1">
    <molecule id="Q9C5P7-1"/>
    <property type="protein sequence ID" value="AT1G02010.1"/>
    <property type="gene ID" value="AT1G02010"/>
</dbReference>
<dbReference type="EnsemblPlants" id="AT1G02010.3">
    <molecule id="Q9C5P7-2"/>
    <property type="protein sequence ID" value="AT1G02010.3"/>
    <property type="gene ID" value="AT1G02010"/>
</dbReference>
<dbReference type="GeneID" id="839288"/>
<dbReference type="Gramene" id="AT1G02010.1">
    <molecule id="Q9C5P7-1"/>
    <property type="protein sequence ID" value="AT1G02010.1"/>
    <property type="gene ID" value="AT1G02010"/>
</dbReference>
<dbReference type="Gramene" id="AT1G02010.3">
    <molecule id="Q9C5P7-2"/>
    <property type="protein sequence ID" value="AT1G02010.3"/>
    <property type="gene ID" value="AT1G02010"/>
</dbReference>
<dbReference type="KEGG" id="ath:AT1G02010"/>
<dbReference type="Araport" id="AT1G02010"/>
<dbReference type="TAIR" id="AT1G02010">
    <property type="gene designation" value="SEC1A"/>
</dbReference>
<dbReference type="eggNOG" id="KOG1300">
    <property type="taxonomic scope" value="Eukaryota"/>
</dbReference>
<dbReference type="HOGENOM" id="CLU_009210_3_0_1"/>
<dbReference type="InParanoid" id="Q9C5P7"/>
<dbReference type="OMA" id="LSTCVRM"/>
<dbReference type="PhylomeDB" id="Q9C5P7"/>
<dbReference type="PRO" id="PR:Q9C5P7"/>
<dbReference type="Proteomes" id="UP000006548">
    <property type="component" value="Chromosome 1"/>
</dbReference>
<dbReference type="ExpressionAtlas" id="Q9C5P7">
    <property type="expression patterns" value="baseline and differential"/>
</dbReference>
<dbReference type="GO" id="GO:0015031">
    <property type="term" value="P:protein transport"/>
    <property type="evidence" value="ECO:0007669"/>
    <property type="project" value="UniProtKB-KW"/>
</dbReference>
<dbReference type="GO" id="GO:0016192">
    <property type="term" value="P:vesicle-mediated transport"/>
    <property type="evidence" value="ECO:0007669"/>
    <property type="project" value="InterPro"/>
</dbReference>
<dbReference type="Gene3D" id="1.25.40.60">
    <property type="match status" value="1"/>
</dbReference>
<dbReference type="Gene3D" id="3.40.50.1910">
    <property type="match status" value="2"/>
</dbReference>
<dbReference type="Gene3D" id="3.40.50.2060">
    <property type="match status" value="1"/>
</dbReference>
<dbReference type="Gene3D" id="3.90.830.10">
    <property type="entry name" value="Syntaxin Binding Protein 1, Chain A, domain 2"/>
    <property type="match status" value="1"/>
</dbReference>
<dbReference type="InterPro" id="IPR043154">
    <property type="entry name" value="Sec-1-like_dom1"/>
</dbReference>
<dbReference type="InterPro" id="IPR043127">
    <property type="entry name" value="Sec-1-like_dom3a"/>
</dbReference>
<dbReference type="InterPro" id="IPR001619">
    <property type="entry name" value="Sec1-like"/>
</dbReference>
<dbReference type="InterPro" id="IPR027482">
    <property type="entry name" value="Sec1-like_dom2"/>
</dbReference>
<dbReference type="InterPro" id="IPR036045">
    <property type="entry name" value="Sec1-like_sf"/>
</dbReference>
<dbReference type="PANTHER" id="PTHR11679">
    <property type="entry name" value="VESICLE PROTEIN SORTING-ASSOCIATED"/>
    <property type="match status" value="1"/>
</dbReference>
<dbReference type="Pfam" id="PF00995">
    <property type="entry name" value="Sec1"/>
    <property type="match status" value="1"/>
</dbReference>
<dbReference type="PIRSF" id="PIRSF005715">
    <property type="entry name" value="VPS45_Sec1"/>
    <property type="match status" value="1"/>
</dbReference>
<dbReference type="SUPFAM" id="SSF56815">
    <property type="entry name" value="Sec1/munc18-like (SM) proteins"/>
    <property type="match status" value="1"/>
</dbReference>
<reference key="1">
    <citation type="journal article" date="2001" name="J. Cell Biol.">
        <title>The cytokinesis gene KEULE encodes a Sec1 protein that binds the syntaxin KNOLLE.</title>
        <authorList>
            <person name="Assaad F.F."/>
            <person name="Huet Y."/>
            <person name="Mayer U."/>
            <person name="Juergens G."/>
        </authorList>
    </citation>
    <scope>NUCLEOTIDE SEQUENCE [MRNA] (ISOFORM 3)</scope>
    <source>
        <tissue>Flower</tissue>
    </source>
</reference>
<reference key="2">
    <citation type="journal article" date="2000" name="Nature">
        <title>Sequence and analysis of chromosome 1 of the plant Arabidopsis thaliana.</title>
        <authorList>
            <person name="Theologis A."/>
            <person name="Ecker J.R."/>
            <person name="Palm C.J."/>
            <person name="Federspiel N.A."/>
            <person name="Kaul S."/>
            <person name="White O."/>
            <person name="Alonso J."/>
            <person name="Altafi H."/>
            <person name="Araujo R."/>
            <person name="Bowman C.L."/>
            <person name="Brooks S.Y."/>
            <person name="Buehler E."/>
            <person name="Chan A."/>
            <person name="Chao Q."/>
            <person name="Chen H."/>
            <person name="Cheuk R.F."/>
            <person name="Chin C.W."/>
            <person name="Chung M.K."/>
            <person name="Conn L."/>
            <person name="Conway A.B."/>
            <person name="Conway A.R."/>
            <person name="Creasy T.H."/>
            <person name="Dewar K."/>
            <person name="Dunn P."/>
            <person name="Etgu P."/>
            <person name="Feldblyum T.V."/>
            <person name="Feng J.-D."/>
            <person name="Fong B."/>
            <person name="Fujii C.Y."/>
            <person name="Gill J.E."/>
            <person name="Goldsmith A.D."/>
            <person name="Haas B."/>
            <person name="Hansen N.F."/>
            <person name="Hughes B."/>
            <person name="Huizar L."/>
            <person name="Hunter J.L."/>
            <person name="Jenkins J."/>
            <person name="Johnson-Hopson C."/>
            <person name="Khan S."/>
            <person name="Khaykin E."/>
            <person name="Kim C.J."/>
            <person name="Koo H.L."/>
            <person name="Kremenetskaia I."/>
            <person name="Kurtz D.B."/>
            <person name="Kwan A."/>
            <person name="Lam B."/>
            <person name="Langin-Hooper S."/>
            <person name="Lee A."/>
            <person name="Lee J.M."/>
            <person name="Lenz C.A."/>
            <person name="Li J.H."/>
            <person name="Li Y.-P."/>
            <person name="Lin X."/>
            <person name="Liu S.X."/>
            <person name="Liu Z.A."/>
            <person name="Luros J.S."/>
            <person name="Maiti R."/>
            <person name="Marziali A."/>
            <person name="Militscher J."/>
            <person name="Miranda M."/>
            <person name="Nguyen M."/>
            <person name="Nierman W.C."/>
            <person name="Osborne B.I."/>
            <person name="Pai G."/>
            <person name="Peterson J."/>
            <person name="Pham P.K."/>
            <person name="Rizzo M."/>
            <person name="Rooney T."/>
            <person name="Rowley D."/>
            <person name="Sakano H."/>
            <person name="Salzberg S.L."/>
            <person name="Schwartz J.R."/>
            <person name="Shinn P."/>
            <person name="Southwick A.M."/>
            <person name="Sun H."/>
            <person name="Tallon L.J."/>
            <person name="Tambunga G."/>
            <person name="Toriumi M.J."/>
            <person name="Town C.D."/>
            <person name="Utterback T."/>
            <person name="Van Aken S."/>
            <person name="Vaysberg M."/>
            <person name="Vysotskaia V.S."/>
            <person name="Walker M."/>
            <person name="Wu D."/>
            <person name="Yu G."/>
            <person name="Fraser C.M."/>
            <person name="Venter J.C."/>
            <person name="Davis R.W."/>
        </authorList>
    </citation>
    <scope>NUCLEOTIDE SEQUENCE [LARGE SCALE GENOMIC DNA]</scope>
    <source>
        <strain>cv. Columbia</strain>
    </source>
</reference>
<reference key="3">
    <citation type="journal article" date="2017" name="Plant J.">
        <title>Araport11: a complete reannotation of the Arabidopsis thaliana reference genome.</title>
        <authorList>
            <person name="Cheng C.Y."/>
            <person name="Krishnakumar V."/>
            <person name="Chan A.P."/>
            <person name="Thibaud-Nissen F."/>
            <person name="Schobel S."/>
            <person name="Town C.D."/>
        </authorList>
    </citation>
    <scope>GENOME REANNOTATION</scope>
    <source>
        <strain>cv. Columbia</strain>
    </source>
</reference>
<reference key="4">
    <citation type="journal article" date="2004" name="Genome Res.">
        <title>Whole genome sequence comparisons and 'full-length' cDNA sequences: a combined approach to evaluate and improve Arabidopsis genome annotation.</title>
        <authorList>
            <person name="Castelli V."/>
            <person name="Aury J.-M."/>
            <person name="Jaillon O."/>
            <person name="Wincker P."/>
            <person name="Clepet C."/>
            <person name="Menard M."/>
            <person name="Cruaud C."/>
            <person name="Quetier F."/>
            <person name="Scarpelli C."/>
            <person name="Schaechter V."/>
            <person name="Temple G."/>
            <person name="Caboche M."/>
            <person name="Weissenbach J."/>
            <person name="Salanoubat M."/>
        </authorList>
    </citation>
    <scope>NUCLEOTIDE SEQUENCE [LARGE SCALE MRNA] (ISOFORM 2)</scope>
    <source>
        <strain>cv. Columbia</strain>
    </source>
</reference>
<proteinExistence type="evidence at transcript level"/>
<accession>Q9C5P7</accession>
<accession>O23672</accession>
<accession>Q9LPC0</accession>
<name>SEC1A_ARATH</name>
<comment type="function">
    <text evidence="1">Involved in the vesicle trafficking. Binds syntaxins (By similarity).</text>
</comment>
<comment type="subunit">
    <text>Does not bind the syntaxin KNOLLE.</text>
</comment>
<comment type="alternative products">
    <event type="alternative splicing"/>
    <isoform>
        <id>Q9C5P7-1</id>
        <name>1</name>
        <sequence type="displayed"/>
    </isoform>
    <isoform>
        <id>Q9C5P7-2</id>
        <name>2</name>
        <sequence type="described" ref="VSP_036638 VSP_036640"/>
    </isoform>
    <isoform>
        <id>Q9C5P7-3</id>
        <name>3</name>
        <sequence type="described" ref="VSP_036635 VSP_036636 VSP_036637 VSP_036639"/>
    </isoform>
</comment>
<comment type="miscellaneous">
    <molecule>Isoform 3</molecule>
    <text evidence="5">Incomplete sequence.</text>
</comment>
<comment type="similarity">
    <text evidence="5">Belongs to the STXBP/unc-18/SEC1 family.</text>
</comment>
<comment type="sequence caution" evidence="5">
    <conflict type="erroneous gene model prediction">
        <sequence resource="EMBL-CDS" id="AAC24365"/>
    </conflict>
</comment>
<comment type="sequence caution" evidence="5">
    <conflict type="erroneous gene model prediction">
        <sequence resource="EMBL-CDS" id="AAF76479"/>
    </conflict>
</comment>
<organism>
    <name type="scientific">Arabidopsis thaliana</name>
    <name type="common">Mouse-ear cress</name>
    <dbReference type="NCBI Taxonomy" id="3702"/>
    <lineage>
        <taxon>Eukaryota</taxon>
        <taxon>Viridiplantae</taxon>
        <taxon>Streptophyta</taxon>
        <taxon>Embryophyta</taxon>
        <taxon>Tracheophyta</taxon>
        <taxon>Spermatophyta</taxon>
        <taxon>Magnoliopsida</taxon>
        <taxon>eudicotyledons</taxon>
        <taxon>Gunneridae</taxon>
        <taxon>Pentapetalae</taxon>
        <taxon>rosids</taxon>
        <taxon>malvids</taxon>
        <taxon>Brassicales</taxon>
        <taxon>Brassicaceae</taxon>
        <taxon>Camelineae</taxon>
        <taxon>Arabidopsis</taxon>
    </lineage>
</organism>
<gene>
    <name type="primary">SEC1A</name>
    <name type="ordered locus">At1g02010</name>
    <name type="ORF">F22M8.14</name>
    <name type="ORF">T7I23.1</name>
</gene>